<keyword id="KW-0903">Direct protein sequencing</keyword>
<keyword id="KW-1015">Disulfide bond</keyword>
<keyword id="KW-0255">Endonuclease</keyword>
<keyword id="KW-0378">Hydrolase</keyword>
<keyword id="KW-0456">Lyase</keyword>
<keyword id="KW-0540">Nuclease</keyword>
<keyword id="KW-1185">Reference proteome</keyword>
<keyword id="KW-0964">Secreted</keyword>
<name>RNAS1_CAMBA</name>
<sequence>SETAAEKFERQHMDSYSSSSSNSNYCNQMMKRREMTDGWCKPVNTFIHESLEDVQAVCSQKSVTCKNGQTNCHQSSTTMHITDCRETGSSKYPNCAYKASNLQKHIIIACEGNPYVPVHFDASV</sequence>
<accession>P67929</accession>
<accession>P00670</accession>
<protein>
    <recommendedName>
        <fullName>Ribonuclease pancreatic</fullName>
        <ecNumber>4.6.1.18</ecNumber>
    </recommendedName>
    <alternativeName>
        <fullName>RNase 1</fullName>
    </alternativeName>
    <alternativeName>
        <fullName>RNase A</fullName>
    </alternativeName>
</protein>
<evidence type="ECO:0000250" key="1"/>
<evidence type="ECO:0000256" key="2">
    <source>
        <dbReference type="SAM" id="MobiDB-lite"/>
    </source>
</evidence>
<evidence type="ECO:0000305" key="3"/>
<organism>
    <name type="scientific">Camelus bactrianus</name>
    <name type="common">Bactrian camel</name>
    <dbReference type="NCBI Taxonomy" id="9837"/>
    <lineage>
        <taxon>Eukaryota</taxon>
        <taxon>Metazoa</taxon>
        <taxon>Chordata</taxon>
        <taxon>Craniata</taxon>
        <taxon>Vertebrata</taxon>
        <taxon>Euteleostomi</taxon>
        <taxon>Mammalia</taxon>
        <taxon>Eutheria</taxon>
        <taxon>Laurasiatheria</taxon>
        <taxon>Artiodactyla</taxon>
        <taxon>Tylopoda</taxon>
        <taxon>Camelidae</taxon>
        <taxon>Camelus</taxon>
    </lineage>
</organism>
<comment type="function">
    <text evidence="1">Endonuclease that catalyzes the cleavage of RNA on the 3' side of pyrimidine nucleotides. Acts on single-stranded and double-stranded RNA (By similarity).</text>
</comment>
<comment type="catalytic activity">
    <reaction>
        <text>an [RNA] containing cytidine + H2O = an [RNA]-3'-cytidine-3'-phosphate + a 5'-hydroxy-ribonucleotide-3'-[RNA].</text>
        <dbReference type="EC" id="4.6.1.18"/>
    </reaction>
</comment>
<comment type="catalytic activity">
    <reaction>
        <text>an [RNA] containing uridine + H2O = an [RNA]-3'-uridine-3'-phosphate + a 5'-hydroxy-ribonucleotide-3'-[RNA].</text>
        <dbReference type="EC" id="4.6.1.18"/>
    </reaction>
</comment>
<comment type="subunit">
    <text evidence="1">Monomer. Interacts with and forms tight 1:1 complexes with RNH1. Dimerization of two such complexes may occur. Interaction with RNH1 inhibits this protein (By similarity).</text>
</comment>
<comment type="subcellular location">
    <subcellularLocation>
        <location>Secreted</location>
    </subcellularLocation>
</comment>
<comment type="tissue specificity">
    <text>Pancreas.</text>
</comment>
<comment type="similarity">
    <text evidence="3">Belongs to the pancreatic ribonuclease family.</text>
</comment>
<reference key="1">
    <citation type="journal article" date="1976" name="Biochem. Genet.">
        <title>Allelic polymorphism in arabian camel ribonuclease and the amino acid sequence of bactrian camel ribonuclease.</title>
        <authorList>
            <person name="Welling G.W."/>
            <person name="Mulder H."/>
            <person name="Beintema J.J."/>
        </authorList>
    </citation>
    <scope>PROTEIN SEQUENCE</scope>
</reference>
<dbReference type="EC" id="4.6.1.18"/>
<dbReference type="PIR" id="B90229">
    <property type="entry name" value="NRCMB"/>
</dbReference>
<dbReference type="SMR" id="P67929"/>
<dbReference type="Proteomes" id="UP000694950">
    <property type="component" value="Unplaced"/>
</dbReference>
<dbReference type="GO" id="GO:0005576">
    <property type="term" value="C:extracellular region"/>
    <property type="evidence" value="ECO:0007669"/>
    <property type="project" value="UniProtKB-SubCell"/>
</dbReference>
<dbReference type="GO" id="GO:0016829">
    <property type="term" value="F:lyase activity"/>
    <property type="evidence" value="ECO:0007669"/>
    <property type="project" value="UniProtKB-KW"/>
</dbReference>
<dbReference type="GO" id="GO:0003676">
    <property type="term" value="F:nucleic acid binding"/>
    <property type="evidence" value="ECO:0007669"/>
    <property type="project" value="InterPro"/>
</dbReference>
<dbReference type="GO" id="GO:0004522">
    <property type="term" value="F:ribonuclease A activity"/>
    <property type="evidence" value="ECO:0007669"/>
    <property type="project" value="UniProtKB-EC"/>
</dbReference>
<dbReference type="GO" id="GO:0050830">
    <property type="term" value="P:defense response to Gram-positive bacterium"/>
    <property type="evidence" value="ECO:0007669"/>
    <property type="project" value="TreeGrafter"/>
</dbReference>
<dbReference type="CDD" id="cd06265">
    <property type="entry name" value="RNase_A_canonical"/>
    <property type="match status" value="1"/>
</dbReference>
<dbReference type="FunFam" id="3.10.130.10:FF:000001">
    <property type="entry name" value="Ribonuclease pancreatic"/>
    <property type="match status" value="1"/>
</dbReference>
<dbReference type="Gene3D" id="3.10.130.10">
    <property type="entry name" value="Ribonuclease A-like domain"/>
    <property type="match status" value="1"/>
</dbReference>
<dbReference type="InterPro" id="IPR001427">
    <property type="entry name" value="RNaseA"/>
</dbReference>
<dbReference type="InterPro" id="IPR036816">
    <property type="entry name" value="RNaseA-like_dom_sf"/>
</dbReference>
<dbReference type="InterPro" id="IPR023411">
    <property type="entry name" value="RNaseA_AS"/>
</dbReference>
<dbReference type="InterPro" id="IPR023412">
    <property type="entry name" value="RNaseA_domain"/>
</dbReference>
<dbReference type="PANTHER" id="PTHR11437">
    <property type="entry name" value="RIBONUCLEASE"/>
    <property type="match status" value="1"/>
</dbReference>
<dbReference type="PANTHER" id="PTHR11437:SF24">
    <property type="entry name" value="RIBONUCLEASE PANCREATIC"/>
    <property type="match status" value="1"/>
</dbReference>
<dbReference type="Pfam" id="PF00074">
    <property type="entry name" value="RnaseA"/>
    <property type="match status" value="1"/>
</dbReference>
<dbReference type="PRINTS" id="PR00794">
    <property type="entry name" value="RIBONUCLEASE"/>
</dbReference>
<dbReference type="SMART" id="SM00092">
    <property type="entry name" value="RNAse_Pc"/>
    <property type="match status" value="1"/>
</dbReference>
<dbReference type="SUPFAM" id="SSF54076">
    <property type="entry name" value="RNase A-like"/>
    <property type="match status" value="1"/>
</dbReference>
<dbReference type="PROSITE" id="PS00127">
    <property type="entry name" value="RNASE_PANCREATIC"/>
    <property type="match status" value="1"/>
</dbReference>
<proteinExistence type="evidence at protein level"/>
<feature type="chain" id="PRO_0000057184" description="Ribonuclease pancreatic">
    <location>
        <begin position="1"/>
        <end position="124"/>
    </location>
</feature>
<feature type="region of interest" description="Disordered" evidence="2">
    <location>
        <begin position="1"/>
        <end position="23"/>
    </location>
</feature>
<feature type="compositionally biased region" description="Basic and acidic residues" evidence="2">
    <location>
        <begin position="1"/>
        <end position="13"/>
    </location>
</feature>
<feature type="active site" description="Proton acceptor" evidence="1">
    <location>
        <position position="12"/>
    </location>
</feature>
<feature type="active site" description="Proton donor" evidence="1">
    <location>
        <position position="119"/>
    </location>
</feature>
<feature type="binding site" evidence="1">
    <location>
        <position position="7"/>
    </location>
    <ligand>
        <name>substrate</name>
    </ligand>
</feature>
<feature type="binding site" evidence="1">
    <location>
        <position position="10"/>
    </location>
    <ligand>
        <name>substrate</name>
    </ligand>
</feature>
<feature type="binding site" evidence="1">
    <location>
        <begin position="41"/>
        <end position="45"/>
    </location>
    <ligand>
        <name>substrate</name>
    </ligand>
</feature>
<feature type="binding site" evidence="1">
    <location>
        <position position="66"/>
    </location>
    <ligand>
        <name>substrate</name>
    </ligand>
</feature>
<feature type="binding site" evidence="1">
    <location>
        <position position="85"/>
    </location>
    <ligand>
        <name>substrate</name>
    </ligand>
</feature>
<feature type="disulfide bond" evidence="1">
    <location>
        <begin position="26"/>
        <end position="84"/>
    </location>
</feature>
<feature type="disulfide bond" evidence="1">
    <location>
        <begin position="40"/>
        <end position="95"/>
    </location>
</feature>
<feature type="disulfide bond" evidence="1">
    <location>
        <begin position="58"/>
        <end position="110"/>
    </location>
</feature>
<feature type="disulfide bond" evidence="1">
    <location>
        <begin position="65"/>
        <end position="72"/>
    </location>
</feature>
<gene>
    <name type="primary">RNASE1</name>
    <name type="synonym">RNS1</name>
</gene>